<comment type="function">
    <text evidence="1">Major early protein present in virus factories. The presence of BEN domains suggests a possible role in organization of viral DNA during replication or transcription. Plays an essential role in the inhibition of the cGAS-dependent type I IFN induction in host dendritic cells. Mechanistically, abolishes cGAMP production by triggering host CGAS degradation via a proteasome-dependent mechanism.</text>
</comment>
<comment type="subunit">
    <text evidence="1">Interacts with host CGAS; this interaction inhibits CGAS-mediated type I interferon response.</text>
</comment>
<comment type="subcellular location">
    <subcellularLocation>
        <location evidence="1">Host cytoplasm</location>
    </subcellularLocation>
    <subcellularLocation>
        <location evidence="1">Host nucleus</location>
    </subcellularLocation>
    <subcellularLocation>
        <location evidence="2">Membrane</location>
        <topology evidence="2">Single-pass membrane protein</topology>
    </subcellularLocation>
    <text evidence="1">Localizes in cytoplasmic virus factories.</text>
</comment>
<comment type="induction">
    <text>Expressed in the early phase of the viral replicative cycle.</text>
</comment>
<comment type="similarity">
    <text evidence="4">Belongs to the orthopoxvirus OPG067 family.</text>
</comment>
<accession>Q01478</accession>
<dbReference type="EMBL" id="M95535">
    <property type="protein sequence ID" value="AAA48234.1"/>
    <property type="molecule type" value="Genomic_DNA"/>
</dbReference>
<dbReference type="SMR" id="Q01478"/>
<dbReference type="GO" id="GO:0030430">
    <property type="term" value="C:host cell cytoplasm"/>
    <property type="evidence" value="ECO:0007669"/>
    <property type="project" value="UniProtKB-SubCell"/>
</dbReference>
<dbReference type="GO" id="GO:0042025">
    <property type="term" value="C:host cell nucleus"/>
    <property type="evidence" value="ECO:0007669"/>
    <property type="project" value="UniProtKB-SubCell"/>
</dbReference>
<dbReference type="GO" id="GO:0016020">
    <property type="term" value="C:membrane"/>
    <property type="evidence" value="ECO:0007669"/>
    <property type="project" value="UniProtKB-SubCell"/>
</dbReference>
<dbReference type="GO" id="GO:0003677">
    <property type="term" value="F:DNA binding"/>
    <property type="evidence" value="ECO:0007669"/>
    <property type="project" value="InterPro"/>
</dbReference>
<dbReference type="GO" id="GO:0052170">
    <property type="term" value="P:symbiont-mediated suppression of host innate immune response"/>
    <property type="evidence" value="ECO:0007669"/>
    <property type="project" value="UniProtKB-KW"/>
</dbReference>
<dbReference type="InterPro" id="IPR018379">
    <property type="entry name" value="BEN_domain"/>
</dbReference>
<dbReference type="InterPro" id="IPR004334">
    <property type="entry name" value="Poxvirus_E5R"/>
</dbReference>
<dbReference type="Pfam" id="PF10523">
    <property type="entry name" value="BEN"/>
    <property type="match status" value="2"/>
</dbReference>
<dbReference type="PIRSF" id="PIRSF015691">
    <property type="entry name" value="VAC_E5R"/>
    <property type="match status" value="1"/>
</dbReference>
<dbReference type="PROSITE" id="PS51457">
    <property type="entry name" value="BEN"/>
    <property type="match status" value="2"/>
</dbReference>
<evidence type="ECO:0000250" key="1">
    <source>
        <dbReference type="UniProtKB" id="P21606"/>
    </source>
</evidence>
<evidence type="ECO:0000255" key="2"/>
<evidence type="ECO:0000255" key="3">
    <source>
        <dbReference type="PROSITE-ProRule" id="PRU00784"/>
    </source>
</evidence>
<evidence type="ECO:0000305" key="4"/>
<protein>
    <recommendedName>
        <fullName>Protein OPG067</fullName>
    </recommendedName>
    <alternativeName>
        <fullName>Protein E5</fullName>
    </alternativeName>
</protein>
<reference key="1">
    <citation type="journal article" date="1992" name="J. Virol.">
        <title>Independent evolution of monkeypox and variola viruses.</title>
        <authorList>
            <person name="Douglass N."/>
            <person name="Dumbell K."/>
        </authorList>
    </citation>
    <scope>NUCLEOTIDE SEQUENCE [GENOMIC DNA]</scope>
</reference>
<keyword id="KW-0244">Early protein</keyword>
<keyword id="KW-1035">Host cytoplasm</keyword>
<keyword id="KW-1048">Host nucleus</keyword>
<keyword id="KW-0945">Host-virus interaction</keyword>
<keyword id="KW-1090">Inhibition of host innate immune response by virus</keyword>
<keyword id="KW-1113">Inhibition of host RLR pathway by virus</keyword>
<keyword id="KW-0472">Membrane</keyword>
<keyword id="KW-0677">Repeat</keyword>
<keyword id="KW-0812">Transmembrane</keyword>
<keyword id="KW-1133">Transmembrane helix</keyword>
<keyword id="KW-0899">Viral immunoevasion</keyword>
<sequence length="341" mass="40437">MLILTKVNIYMLIIVLWLYGHNFIMSESQCPMINDDSFTLKRKYQIDSAESTIKMDKKRIKFQNRAKMVKEINQTIRVAQTHYETLKLGYIKFKRMIRTTTLEDIAPSIPNNQKTYKLFSDISAIGKASQNPSKMVYALLLYMFPNLFGDDHRFIRYRMHPMSKIKHKIFSPFKLNLIRILVEERFYNNECRSNKWRIIGTQVDKMLIAESDKYTIDARYRLRPIYRIKGKSEEDTLFIKQMVEQCVTSQELVEKVLKILFRDLFKSGEYKAYRYDDDVENGFIGLDTLKLNIVHDIVEPCMPVRRPVAKILCKEMVNKYFENPLHIIGKNLQECIDFVSE</sequence>
<organism>
    <name type="scientific">Vaccinia virus (strain Dairen I)</name>
    <name type="common">VACV</name>
    <dbReference type="NCBI Taxonomy" id="10250"/>
    <lineage>
        <taxon>Viruses</taxon>
        <taxon>Varidnaviria</taxon>
        <taxon>Bamfordvirae</taxon>
        <taxon>Nucleocytoviricota</taxon>
        <taxon>Pokkesviricetes</taxon>
        <taxon>Chitovirales</taxon>
        <taxon>Poxviridae</taxon>
        <taxon>Chordopoxvirinae</taxon>
        <taxon>Orthopoxvirus</taxon>
        <taxon>Vaccinia virus</taxon>
    </lineage>
</organism>
<proteinExistence type="evidence at transcript level"/>
<feature type="chain" id="PRO_0000099451" description="Protein OPG067">
    <location>
        <begin position="1"/>
        <end position="341"/>
    </location>
</feature>
<feature type="transmembrane region" description="Helical" evidence="2">
    <location>
        <begin position="7"/>
        <end position="25"/>
    </location>
</feature>
<feature type="domain" description="BEN 1" evidence="3">
    <location>
        <begin position="112"/>
        <end position="222"/>
    </location>
</feature>
<feature type="domain" description="BEN 2" evidence="3">
    <location>
        <begin position="233"/>
        <end position="328"/>
    </location>
</feature>
<name>PG067_VACCD</name>
<gene>
    <name type="primary">OPG067</name>
    <name type="ORF">E5R</name>
</gene>
<organismHost>
    <name type="scientific">Homo sapiens</name>
    <name type="common">Human</name>
    <dbReference type="NCBI Taxonomy" id="9606"/>
</organismHost>